<feature type="chain" id="PRO_0000091961" description="Vitamin B12 import ATP-binding protein BtuD">
    <location>
        <begin position="1"/>
        <end position="251"/>
    </location>
</feature>
<feature type="domain" description="ABC transporter" evidence="1">
    <location>
        <begin position="2"/>
        <end position="236"/>
    </location>
</feature>
<feature type="binding site" evidence="1">
    <location>
        <begin position="30"/>
        <end position="37"/>
    </location>
    <ligand>
        <name>ATP</name>
        <dbReference type="ChEBI" id="CHEBI:30616"/>
    </ligand>
</feature>
<protein>
    <recommendedName>
        <fullName evidence="1">Vitamin B12 import ATP-binding protein BtuD</fullName>
        <ecNumber evidence="1">7.6.2.8</ecNumber>
    </recommendedName>
    <alternativeName>
        <fullName evidence="1">Vitamin B12-transporting ATPase</fullName>
    </alternativeName>
</protein>
<sequence length="251" mass="27531">MIRVNSLQVDSRLLPLSLQANAGEVWHVIGPNGCGKSTLLAALAGMIPFSGSVQVDGLDVSQASLSELARHRAYLAQNNKPSFQLHVFQYLALSVPANVALECSEVASEIDQISRLLNIDDKLHRSIHQLSGGEWQRVRLAGSCLQVSPVLNPSARLLIWDEPAAPLDIAQESLLYRLIERMAGQGLTVIMANHDLNRTLRHADQVLLLSRGVLYRAGSAKEVLTQEVLQSVFGTSIRRVELEGHPHLLFD</sequence>
<keyword id="KW-0067">ATP-binding</keyword>
<keyword id="KW-0997">Cell inner membrane</keyword>
<keyword id="KW-1003">Cell membrane</keyword>
<keyword id="KW-0472">Membrane</keyword>
<keyword id="KW-0547">Nucleotide-binding</keyword>
<keyword id="KW-1185">Reference proteome</keyword>
<keyword id="KW-1278">Translocase</keyword>
<keyword id="KW-0813">Transport</keyword>
<gene>
    <name evidence="1" type="primary">btuD</name>
    <name type="ordered locus">VC_1245</name>
</gene>
<organism>
    <name type="scientific">Vibrio cholerae serotype O1 (strain ATCC 39315 / El Tor Inaba N16961)</name>
    <dbReference type="NCBI Taxonomy" id="243277"/>
    <lineage>
        <taxon>Bacteria</taxon>
        <taxon>Pseudomonadati</taxon>
        <taxon>Pseudomonadota</taxon>
        <taxon>Gammaproteobacteria</taxon>
        <taxon>Vibrionales</taxon>
        <taxon>Vibrionaceae</taxon>
        <taxon>Vibrio</taxon>
    </lineage>
</organism>
<dbReference type="EC" id="7.6.2.8" evidence="1"/>
<dbReference type="EMBL" id="AE003852">
    <property type="protein sequence ID" value="AAF94404.1"/>
    <property type="molecule type" value="Genomic_DNA"/>
</dbReference>
<dbReference type="PIR" id="H82224">
    <property type="entry name" value="H82224"/>
</dbReference>
<dbReference type="RefSeq" id="NP_230890.1">
    <property type="nucleotide sequence ID" value="NC_002505.1"/>
</dbReference>
<dbReference type="RefSeq" id="WP_000621843.1">
    <property type="nucleotide sequence ID" value="NZ_LT906614.1"/>
</dbReference>
<dbReference type="SMR" id="Q9KSL1"/>
<dbReference type="STRING" id="243277.VC_1245"/>
<dbReference type="DNASU" id="2614682"/>
<dbReference type="EnsemblBacteria" id="AAF94404">
    <property type="protein sequence ID" value="AAF94404"/>
    <property type="gene ID" value="VC_1245"/>
</dbReference>
<dbReference type="KEGG" id="vch:VC_1245"/>
<dbReference type="PATRIC" id="fig|243277.26.peg.1185"/>
<dbReference type="eggNOG" id="COG4138">
    <property type="taxonomic scope" value="Bacteria"/>
</dbReference>
<dbReference type="HOGENOM" id="CLU_000604_1_11_6"/>
<dbReference type="Proteomes" id="UP000000584">
    <property type="component" value="Chromosome 1"/>
</dbReference>
<dbReference type="GO" id="GO:0043190">
    <property type="term" value="C:ATP-binding cassette (ABC) transporter complex"/>
    <property type="evidence" value="ECO:0000318"/>
    <property type="project" value="GO_Central"/>
</dbReference>
<dbReference type="GO" id="GO:0015420">
    <property type="term" value="F:ABC-type vitamin B12 transporter activity"/>
    <property type="evidence" value="ECO:0007669"/>
    <property type="project" value="UniProtKB-UniRule"/>
</dbReference>
<dbReference type="GO" id="GO:0005524">
    <property type="term" value="F:ATP binding"/>
    <property type="evidence" value="ECO:0007669"/>
    <property type="project" value="UniProtKB-KW"/>
</dbReference>
<dbReference type="GO" id="GO:0016887">
    <property type="term" value="F:ATP hydrolysis activity"/>
    <property type="evidence" value="ECO:0007669"/>
    <property type="project" value="InterPro"/>
</dbReference>
<dbReference type="GO" id="GO:0042626">
    <property type="term" value="F:ATPase-coupled transmembrane transporter activity"/>
    <property type="evidence" value="ECO:0000318"/>
    <property type="project" value="GO_Central"/>
</dbReference>
<dbReference type="CDD" id="cd03214">
    <property type="entry name" value="ABC_Iron-Siderophores_B12_Hemin"/>
    <property type="match status" value="1"/>
</dbReference>
<dbReference type="FunFam" id="3.40.50.300:FF:000462">
    <property type="entry name" value="Vitamin B12 import ATP-binding protein BtuD"/>
    <property type="match status" value="1"/>
</dbReference>
<dbReference type="Gene3D" id="3.40.50.300">
    <property type="entry name" value="P-loop containing nucleotide triphosphate hydrolases"/>
    <property type="match status" value="1"/>
</dbReference>
<dbReference type="HAMAP" id="MF_01005">
    <property type="entry name" value="BtuD"/>
    <property type="match status" value="1"/>
</dbReference>
<dbReference type="InterPro" id="IPR003593">
    <property type="entry name" value="AAA+_ATPase"/>
</dbReference>
<dbReference type="InterPro" id="IPR003439">
    <property type="entry name" value="ABC_transporter-like_ATP-bd"/>
</dbReference>
<dbReference type="InterPro" id="IPR023693">
    <property type="entry name" value="ABC_transptr_BtuD"/>
</dbReference>
<dbReference type="InterPro" id="IPR050153">
    <property type="entry name" value="Metal_Ion_Import_ABC"/>
</dbReference>
<dbReference type="InterPro" id="IPR027417">
    <property type="entry name" value="P-loop_NTPase"/>
</dbReference>
<dbReference type="NCBIfam" id="NF002981">
    <property type="entry name" value="PRK03695.1"/>
    <property type="match status" value="1"/>
</dbReference>
<dbReference type="PANTHER" id="PTHR42734">
    <property type="entry name" value="METAL TRANSPORT SYSTEM ATP-BINDING PROTEIN TM_0124-RELATED"/>
    <property type="match status" value="1"/>
</dbReference>
<dbReference type="PANTHER" id="PTHR42734:SF18">
    <property type="entry name" value="VITAMIN B12 IMPORT ATP-BINDING PROTEIN BTUD"/>
    <property type="match status" value="1"/>
</dbReference>
<dbReference type="Pfam" id="PF00005">
    <property type="entry name" value="ABC_tran"/>
    <property type="match status" value="1"/>
</dbReference>
<dbReference type="SMART" id="SM00382">
    <property type="entry name" value="AAA"/>
    <property type="match status" value="1"/>
</dbReference>
<dbReference type="SUPFAM" id="SSF52540">
    <property type="entry name" value="P-loop containing nucleoside triphosphate hydrolases"/>
    <property type="match status" value="1"/>
</dbReference>
<dbReference type="PROSITE" id="PS50893">
    <property type="entry name" value="ABC_TRANSPORTER_2"/>
    <property type="match status" value="1"/>
</dbReference>
<reference key="1">
    <citation type="journal article" date="2000" name="Nature">
        <title>DNA sequence of both chromosomes of the cholera pathogen Vibrio cholerae.</title>
        <authorList>
            <person name="Heidelberg J.F."/>
            <person name="Eisen J.A."/>
            <person name="Nelson W.C."/>
            <person name="Clayton R.A."/>
            <person name="Gwinn M.L."/>
            <person name="Dodson R.J."/>
            <person name="Haft D.H."/>
            <person name="Hickey E.K."/>
            <person name="Peterson J.D."/>
            <person name="Umayam L.A."/>
            <person name="Gill S.R."/>
            <person name="Nelson K.E."/>
            <person name="Read T.D."/>
            <person name="Tettelin H."/>
            <person name="Richardson D.L."/>
            <person name="Ermolaeva M.D."/>
            <person name="Vamathevan J.J."/>
            <person name="Bass S."/>
            <person name="Qin H."/>
            <person name="Dragoi I."/>
            <person name="Sellers P."/>
            <person name="McDonald L.A."/>
            <person name="Utterback T.R."/>
            <person name="Fleischmann R.D."/>
            <person name="Nierman W.C."/>
            <person name="White O."/>
            <person name="Salzberg S.L."/>
            <person name="Smith H.O."/>
            <person name="Colwell R.R."/>
            <person name="Mekalanos J.J."/>
            <person name="Venter J.C."/>
            <person name="Fraser C.M."/>
        </authorList>
    </citation>
    <scope>NUCLEOTIDE SEQUENCE [LARGE SCALE GENOMIC DNA]</scope>
    <source>
        <strain>ATCC 39315 / El Tor Inaba N16961</strain>
    </source>
</reference>
<accession>Q9KSL1</accession>
<proteinExistence type="inferred from homology"/>
<name>BTUD_VIBCH</name>
<evidence type="ECO:0000255" key="1">
    <source>
        <dbReference type="HAMAP-Rule" id="MF_01005"/>
    </source>
</evidence>
<comment type="function">
    <text evidence="1">Part of the ABC transporter complex BtuCDF involved in vitamin B12 import. Responsible for energy coupling to the transport system.</text>
</comment>
<comment type="catalytic activity">
    <reaction evidence="1">
        <text>an R-cob(III)alamin(out) + ATP + H2O = an R-cob(III)alamin(in) + ADP + phosphate + H(+)</text>
        <dbReference type="Rhea" id="RHEA:17873"/>
        <dbReference type="ChEBI" id="CHEBI:15377"/>
        <dbReference type="ChEBI" id="CHEBI:15378"/>
        <dbReference type="ChEBI" id="CHEBI:30616"/>
        <dbReference type="ChEBI" id="CHEBI:43474"/>
        <dbReference type="ChEBI" id="CHEBI:140785"/>
        <dbReference type="ChEBI" id="CHEBI:456216"/>
        <dbReference type="EC" id="7.6.2.8"/>
    </reaction>
</comment>
<comment type="subunit">
    <text evidence="1">The complex is composed of two ATP-binding proteins (BtuD), two transmembrane proteins (BtuC) and a solute-binding protein (BtuF).</text>
</comment>
<comment type="subcellular location">
    <subcellularLocation>
        <location evidence="1">Cell inner membrane</location>
        <topology evidence="1">Peripheral membrane protein</topology>
    </subcellularLocation>
</comment>
<comment type="similarity">
    <text evidence="1">Belongs to the ABC transporter superfamily. Vitamin B12 importer (TC 3.A.1.13.1) family.</text>
</comment>